<sequence length="429" mass="47129">MATEQRPFHLVVFGASGFTGQFVTEEVAREQIASEQSSRLPWAVAGRSKEKLQQVLEKAAQKLGRPSLSSEVGVIICDISNPASLDEMAKQAKLVLNCVGPYRFYGEPVVKACIENGTSCIDICGEPQFLELMHAKYHEKAAEKGVYIIGSSGFDSIPADLGVLYTRNQMNGTLTAVESFLTINTGPEGLCIHDGTWKSAIYGFGDKGSLRKLRSVSCLKPVPIVGTKLKRRWPVSYCRELNSYSIPFLGSDISVVKRTQRYLHENLEDSPVQYAAYVTVGGITSVIKLMFAGLFFLFFVKFSIGRQLLIKFPWLFSFGYFSKQGPTQKQMDETSFTMTFFGQGYSHGTCVEKNKPNIRICTQVKGPEAGYVATPIAMVQAAMTFLSDASDLPKGGGVFTPGAAFSRTKLIDRLNKHGIEFSVISSSEV</sequence>
<proteinExistence type="evidence at protein level"/>
<organism>
    <name type="scientific">Mus musculus</name>
    <name type="common">Mouse</name>
    <dbReference type="NCBI Taxonomy" id="10090"/>
    <lineage>
        <taxon>Eukaryota</taxon>
        <taxon>Metazoa</taxon>
        <taxon>Chordata</taxon>
        <taxon>Craniata</taxon>
        <taxon>Vertebrata</taxon>
        <taxon>Euteleostomi</taxon>
        <taxon>Mammalia</taxon>
        <taxon>Eutheria</taxon>
        <taxon>Euarchontoglires</taxon>
        <taxon>Glires</taxon>
        <taxon>Rodentia</taxon>
        <taxon>Myomorpha</taxon>
        <taxon>Muroidea</taxon>
        <taxon>Muridae</taxon>
        <taxon>Murinae</taxon>
        <taxon>Mus</taxon>
        <taxon>Mus</taxon>
    </lineage>
</organism>
<accession>Q8R127</accession>
<accession>Q3TMB9</accession>
<comment type="similarity">
    <text evidence="3">Belongs to the saccharopine dehydrogenase family.</text>
</comment>
<protein>
    <recommendedName>
        <fullName>Saccharopine dehydrogenase-like oxidoreductase</fullName>
        <ecNumber>1.-.-.-</ecNumber>
    </recommendedName>
</protein>
<gene>
    <name type="primary">Sccpdh</name>
</gene>
<evidence type="ECO:0000250" key="1">
    <source>
        <dbReference type="UniProtKB" id="Q6AY30"/>
    </source>
</evidence>
<evidence type="ECO:0000250" key="2">
    <source>
        <dbReference type="UniProtKB" id="Q8NBX0"/>
    </source>
</evidence>
<evidence type="ECO:0000305" key="3"/>
<keyword id="KW-0007">Acetylation</keyword>
<keyword id="KW-0560">Oxidoreductase</keyword>
<keyword id="KW-0597">Phosphoprotein</keyword>
<keyword id="KW-1185">Reference proteome</keyword>
<dbReference type="EC" id="1.-.-.-"/>
<dbReference type="EMBL" id="AK042919">
    <property type="protein sequence ID" value="BAC31405.1"/>
    <property type="molecule type" value="mRNA"/>
</dbReference>
<dbReference type="EMBL" id="AK046033">
    <property type="protein sequence ID" value="BAC32578.1"/>
    <property type="molecule type" value="mRNA"/>
</dbReference>
<dbReference type="EMBL" id="AK077695">
    <property type="protein sequence ID" value="BAC36962.1"/>
    <property type="molecule type" value="mRNA"/>
</dbReference>
<dbReference type="EMBL" id="AK082803">
    <property type="protein sequence ID" value="BAC38628.1"/>
    <property type="molecule type" value="mRNA"/>
</dbReference>
<dbReference type="EMBL" id="AK166018">
    <property type="protein sequence ID" value="BAE38523.1"/>
    <property type="molecule type" value="mRNA"/>
</dbReference>
<dbReference type="EMBL" id="BC025803">
    <property type="protein sequence ID" value="AAH25803.1"/>
    <property type="molecule type" value="mRNA"/>
</dbReference>
<dbReference type="CCDS" id="CCDS15563.1"/>
<dbReference type="RefSeq" id="NP_848768.1">
    <property type="nucleotide sequence ID" value="NM_178653.4"/>
</dbReference>
<dbReference type="SMR" id="Q8R127"/>
<dbReference type="BioGRID" id="224610">
    <property type="interactions" value="5"/>
</dbReference>
<dbReference type="FunCoup" id="Q8R127">
    <property type="interactions" value="679"/>
</dbReference>
<dbReference type="IntAct" id="Q8R127">
    <property type="interactions" value="1"/>
</dbReference>
<dbReference type="MINT" id="Q8R127"/>
<dbReference type="STRING" id="10090.ENSMUSP00000040956"/>
<dbReference type="GlyGen" id="Q8R127">
    <property type="glycosylation" value="3 sites, 1 N-linked glycan (1 site), 1 O-linked glycan (1 site)"/>
</dbReference>
<dbReference type="iPTMnet" id="Q8R127"/>
<dbReference type="PhosphoSitePlus" id="Q8R127"/>
<dbReference type="SwissPalm" id="Q8R127"/>
<dbReference type="jPOST" id="Q8R127"/>
<dbReference type="PaxDb" id="10090-ENSMUSP00000040956"/>
<dbReference type="PeptideAtlas" id="Q8R127"/>
<dbReference type="ProteomicsDB" id="261135"/>
<dbReference type="Pumba" id="Q8R127"/>
<dbReference type="TopDownProteomics" id="Q8R127"/>
<dbReference type="Antibodypedia" id="34722">
    <property type="antibodies" value="131 antibodies from 26 providers"/>
</dbReference>
<dbReference type="DNASU" id="109232"/>
<dbReference type="Ensembl" id="ENSMUST00000040538.10">
    <property type="protein sequence ID" value="ENSMUSP00000040956.4"/>
    <property type="gene ID" value="ENSMUSG00000038936.14"/>
</dbReference>
<dbReference type="GeneID" id="109232"/>
<dbReference type="KEGG" id="mmu:109232"/>
<dbReference type="UCSC" id="uc007dvp.1">
    <property type="organism name" value="mouse"/>
</dbReference>
<dbReference type="AGR" id="MGI:1924486"/>
<dbReference type="CTD" id="51097"/>
<dbReference type="MGI" id="MGI:1924486">
    <property type="gene designation" value="Sccpdh"/>
</dbReference>
<dbReference type="VEuPathDB" id="HostDB:ENSMUSG00000038936"/>
<dbReference type="eggNOG" id="KOG2733">
    <property type="taxonomic scope" value="Eukaryota"/>
</dbReference>
<dbReference type="GeneTree" id="ENSGT00390000004799"/>
<dbReference type="HOGENOM" id="CLU_031002_1_0_1"/>
<dbReference type="InParanoid" id="Q8R127"/>
<dbReference type="OMA" id="MQLRYHD"/>
<dbReference type="OrthoDB" id="10268090at2759"/>
<dbReference type="PhylomeDB" id="Q8R127"/>
<dbReference type="TreeFam" id="TF314904"/>
<dbReference type="Reactome" id="R-MMU-114608">
    <property type="pathway name" value="Platelet degranulation"/>
</dbReference>
<dbReference type="BioGRID-ORCS" id="109232">
    <property type="hits" value="0 hits in 77 CRISPR screens"/>
</dbReference>
<dbReference type="CD-CODE" id="CE726F99">
    <property type="entry name" value="Postsynaptic density"/>
</dbReference>
<dbReference type="ChiTaRS" id="Sccpdh">
    <property type="organism name" value="mouse"/>
</dbReference>
<dbReference type="PRO" id="PR:Q8R127"/>
<dbReference type="Proteomes" id="UP000000589">
    <property type="component" value="Chromosome 1"/>
</dbReference>
<dbReference type="RNAct" id="Q8R127">
    <property type="molecule type" value="protein"/>
</dbReference>
<dbReference type="Bgee" id="ENSMUSG00000038936">
    <property type="expression patterns" value="Expressed in spermatid and 237 other cell types or tissues"/>
</dbReference>
<dbReference type="ExpressionAtlas" id="Q8R127">
    <property type="expression patterns" value="baseline and differential"/>
</dbReference>
<dbReference type="GO" id="GO:0005811">
    <property type="term" value="C:lipid droplet"/>
    <property type="evidence" value="ECO:0007669"/>
    <property type="project" value="Ensembl"/>
</dbReference>
<dbReference type="GO" id="GO:0030496">
    <property type="term" value="C:midbody"/>
    <property type="evidence" value="ECO:0007669"/>
    <property type="project" value="Ensembl"/>
</dbReference>
<dbReference type="GO" id="GO:0005739">
    <property type="term" value="C:mitochondrion"/>
    <property type="evidence" value="ECO:0007005"/>
    <property type="project" value="MGI"/>
</dbReference>
<dbReference type="GO" id="GO:0016491">
    <property type="term" value="F:oxidoreductase activity"/>
    <property type="evidence" value="ECO:0007669"/>
    <property type="project" value="UniProtKB-KW"/>
</dbReference>
<dbReference type="FunFam" id="3.40.50.720:FF:000178">
    <property type="entry name" value="Saccharopine dehydrogenase-like oxidoreductase"/>
    <property type="match status" value="1"/>
</dbReference>
<dbReference type="Gene3D" id="3.40.50.720">
    <property type="entry name" value="NAD(P)-binding Rossmann-like Domain"/>
    <property type="match status" value="1"/>
</dbReference>
<dbReference type="InterPro" id="IPR036291">
    <property type="entry name" value="NAD(P)-bd_dom_sf"/>
</dbReference>
<dbReference type="InterPro" id="IPR051276">
    <property type="entry name" value="Saccharopine_DH-like_oxidrdct"/>
</dbReference>
<dbReference type="InterPro" id="IPR005097">
    <property type="entry name" value="Sacchrp_dh_NADP-bd"/>
</dbReference>
<dbReference type="PANTHER" id="PTHR12286">
    <property type="entry name" value="SACCHAROPINE DEHYDROGENASE-LIKE OXIDOREDUCTASE"/>
    <property type="match status" value="1"/>
</dbReference>
<dbReference type="PANTHER" id="PTHR12286:SF5">
    <property type="entry name" value="SACCHAROPINE DEHYDROGENASE-LIKE OXIDOREDUCTASE"/>
    <property type="match status" value="1"/>
</dbReference>
<dbReference type="Pfam" id="PF03435">
    <property type="entry name" value="Sacchrp_dh_NADP"/>
    <property type="match status" value="1"/>
</dbReference>
<dbReference type="SUPFAM" id="SSF51735">
    <property type="entry name" value="NAD(P)-binding Rossmann-fold domains"/>
    <property type="match status" value="1"/>
</dbReference>
<reference key="1">
    <citation type="journal article" date="2005" name="Science">
        <title>The transcriptional landscape of the mammalian genome.</title>
        <authorList>
            <person name="Carninci P."/>
            <person name="Kasukawa T."/>
            <person name="Katayama S."/>
            <person name="Gough J."/>
            <person name="Frith M.C."/>
            <person name="Maeda N."/>
            <person name="Oyama R."/>
            <person name="Ravasi T."/>
            <person name="Lenhard B."/>
            <person name="Wells C."/>
            <person name="Kodzius R."/>
            <person name="Shimokawa K."/>
            <person name="Bajic V.B."/>
            <person name="Brenner S.E."/>
            <person name="Batalov S."/>
            <person name="Forrest A.R."/>
            <person name="Zavolan M."/>
            <person name="Davis M.J."/>
            <person name="Wilming L.G."/>
            <person name="Aidinis V."/>
            <person name="Allen J.E."/>
            <person name="Ambesi-Impiombato A."/>
            <person name="Apweiler R."/>
            <person name="Aturaliya R.N."/>
            <person name="Bailey T.L."/>
            <person name="Bansal M."/>
            <person name="Baxter L."/>
            <person name="Beisel K.W."/>
            <person name="Bersano T."/>
            <person name="Bono H."/>
            <person name="Chalk A.M."/>
            <person name="Chiu K.P."/>
            <person name="Choudhary V."/>
            <person name="Christoffels A."/>
            <person name="Clutterbuck D.R."/>
            <person name="Crowe M.L."/>
            <person name="Dalla E."/>
            <person name="Dalrymple B.P."/>
            <person name="de Bono B."/>
            <person name="Della Gatta G."/>
            <person name="di Bernardo D."/>
            <person name="Down T."/>
            <person name="Engstrom P."/>
            <person name="Fagiolini M."/>
            <person name="Faulkner G."/>
            <person name="Fletcher C.F."/>
            <person name="Fukushima T."/>
            <person name="Furuno M."/>
            <person name="Futaki S."/>
            <person name="Gariboldi M."/>
            <person name="Georgii-Hemming P."/>
            <person name="Gingeras T.R."/>
            <person name="Gojobori T."/>
            <person name="Green R.E."/>
            <person name="Gustincich S."/>
            <person name="Harbers M."/>
            <person name="Hayashi Y."/>
            <person name="Hensch T.K."/>
            <person name="Hirokawa N."/>
            <person name="Hill D."/>
            <person name="Huminiecki L."/>
            <person name="Iacono M."/>
            <person name="Ikeo K."/>
            <person name="Iwama A."/>
            <person name="Ishikawa T."/>
            <person name="Jakt M."/>
            <person name="Kanapin A."/>
            <person name="Katoh M."/>
            <person name="Kawasawa Y."/>
            <person name="Kelso J."/>
            <person name="Kitamura H."/>
            <person name="Kitano H."/>
            <person name="Kollias G."/>
            <person name="Krishnan S.P."/>
            <person name="Kruger A."/>
            <person name="Kummerfeld S.K."/>
            <person name="Kurochkin I.V."/>
            <person name="Lareau L.F."/>
            <person name="Lazarevic D."/>
            <person name="Lipovich L."/>
            <person name="Liu J."/>
            <person name="Liuni S."/>
            <person name="McWilliam S."/>
            <person name="Madan Babu M."/>
            <person name="Madera M."/>
            <person name="Marchionni L."/>
            <person name="Matsuda H."/>
            <person name="Matsuzawa S."/>
            <person name="Miki H."/>
            <person name="Mignone F."/>
            <person name="Miyake S."/>
            <person name="Morris K."/>
            <person name="Mottagui-Tabar S."/>
            <person name="Mulder N."/>
            <person name="Nakano N."/>
            <person name="Nakauchi H."/>
            <person name="Ng P."/>
            <person name="Nilsson R."/>
            <person name="Nishiguchi S."/>
            <person name="Nishikawa S."/>
            <person name="Nori F."/>
            <person name="Ohara O."/>
            <person name="Okazaki Y."/>
            <person name="Orlando V."/>
            <person name="Pang K.C."/>
            <person name="Pavan W.J."/>
            <person name="Pavesi G."/>
            <person name="Pesole G."/>
            <person name="Petrovsky N."/>
            <person name="Piazza S."/>
            <person name="Reed J."/>
            <person name="Reid J.F."/>
            <person name="Ring B.Z."/>
            <person name="Ringwald M."/>
            <person name="Rost B."/>
            <person name="Ruan Y."/>
            <person name="Salzberg S.L."/>
            <person name="Sandelin A."/>
            <person name="Schneider C."/>
            <person name="Schoenbach C."/>
            <person name="Sekiguchi K."/>
            <person name="Semple C.A."/>
            <person name="Seno S."/>
            <person name="Sessa L."/>
            <person name="Sheng Y."/>
            <person name="Shibata Y."/>
            <person name="Shimada H."/>
            <person name="Shimada K."/>
            <person name="Silva D."/>
            <person name="Sinclair B."/>
            <person name="Sperling S."/>
            <person name="Stupka E."/>
            <person name="Sugiura K."/>
            <person name="Sultana R."/>
            <person name="Takenaka Y."/>
            <person name="Taki K."/>
            <person name="Tammoja K."/>
            <person name="Tan S.L."/>
            <person name="Tang S."/>
            <person name="Taylor M.S."/>
            <person name="Tegner J."/>
            <person name="Teichmann S.A."/>
            <person name="Ueda H.R."/>
            <person name="van Nimwegen E."/>
            <person name="Verardo R."/>
            <person name="Wei C.L."/>
            <person name="Yagi K."/>
            <person name="Yamanishi H."/>
            <person name="Zabarovsky E."/>
            <person name="Zhu S."/>
            <person name="Zimmer A."/>
            <person name="Hide W."/>
            <person name="Bult C."/>
            <person name="Grimmond S.M."/>
            <person name="Teasdale R.D."/>
            <person name="Liu E.T."/>
            <person name="Brusic V."/>
            <person name="Quackenbush J."/>
            <person name="Wahlestedt C."/>
            <person name="Mattick J.S."/>
            <person name="Hume D.A."/>
            <person name="Kai C."/>
            <person name="Sasaki D."/>
            <person name="Tomaru Y."/>
            <person name="Fukuda S."/>
            <person name="Kanamori-Katayama M."/>
            <person name="Suzuki M."/>
            <person name="Aoki J."/>
            <person name="Arakawa T."/>
            <person name="Iida J."/>
            <person name="Imamura K."/>
            <person name="Itoh M."/>
            <person name="Kato T."/>
            <person name="Kawaji H."/>
            <person name="Kawagashira N."/>
            <person name="Kawashima T."/>
            <person name="Kojima M."/>
            <person name="Kondo S."/>
            <person name="Konno H."/>
            <person name="Nakano K."/>
            <person name="Ninomiya N."/>
            <person name="Nishio T."/>
            <person name="Okada M."/>
            <person name="Plessy C."/>
            <person name="Shibata K."/>
            <person name="Shiraki T."/>
            <person name="Suzuki S."/>
            <person name="Tagami M."/>
            <person name="Waki K."/>
            <person name="Watahiki A."/>
            <person name="Okamura-Oho Y."/>
            <person name="Suzuki H."/>
            <person name="Kawai J."/>
            <person name="Hayashizaki Y."/>
        </authorList>
    </citation>
    <scope>NUCLEOTIDE SEQUENCE [LARGE SCALE MRNA]</scope>
    <source>
        <strain>C57BL/6J</strain>
        <tissue>Cerebellum</tissue>
        <tissue>Corpora quadrigemina</tissue>
        <tissue>Lung</tissue>
    </source>
</reference>
<reference key="2">
    <citation type="journal article" date="2004" name="Genome Res.">
        <title>The status, quality, and expansion of the NIH full-length cDNA project: the Mammalian Gene Collection (MGC).</title>
        <authorList>
            <consortium name="The MGC Project Team"/>
        </authorList>
    </citation>
    <scope>NUCLEOTIDE SEQUENCE [LARGE SCALE MRNA]</scope>
    <source>
        <strain>FVB/N</strain>
        <tissue>Liver</tissue>
    </source>
</reference>
<reference key="3">
    <citation type="journal article" date="2010" name="Cell">
        <title>A tissue-specific atlas of mouse protein phosphorylation and expression.</title>
        <authorList>
            <person name="Huttlin E.L."/>
            <person name="Jedrychowski M.P."/>
            <person name="Elias J.E."/>
            <person name="Goswami T."/>
            <person name="Rad R."/>
            <person name="Beausoleil S.A."/>
            <person name="Villen J."/>
            <person name="Haas W."/>
            <person name="Sowa M.E."/>
            <person name="Gygi S.P."/>
        </authorList>
    </citation>
    <scope>IDENTIFICATION BY MASS SPECTROMETRY [LARGE SCALE ANALYSIS]</scope>
    <source>
        <tissue>Brain</tissue>
        <tissue>Brown adipose tissue</tissue>
        <tissue>Heart</tissue>
        <tissue>Kidney</tissue>
        <tissue>Lung</tissue>
        <tissue>Spleen</tissue>
        <tissue>Testis</tissue>
    </source>
</reference>
<name>SCPDL_MOUSE</name>
<feature type="initiator methionine" description="Removed" evidence="2">
    <location>
        <position position="1"/>
    </location>
</feature>
<feature type="chain" id="PRO_0000212841" description="Saccharopine dehydrogenase-like oxidoreductase">
    <location>
        <begin position="2"/>
        <end position="429"/>
    </location>
</feature>
<feature type="modified residue" description="N-acetylalanine" evidence="2">
    <location>
        <position position="2"/>
    </location>
</feature>
<feature type="modified residue" description="Phosphoserine" evidence="1">
    <location>
        <position position="209"/>
    </location>
</feature>
<feature type="modified residue" description="Phosphoserine" evidence="1">
    <location>
        <position position="215"/>
    </location>
</feature>
<feature type="modified residue" description="Phosphoserine" evidence="2">
    <location>
        <position position="217"/>
    </location>
</feature>